<keyword id="KW-0007">Acetylation</keyword>
<keyword id="KW-0131">Cell cycle</keyword>
<keyword id="KW-0132">Cell division</keyword>
<keyword id="KW-0966">Cell projection</keyword>
<keyword id="KW-0969">Cilium</keyword>
<keyword id="KW-0963">Cytoplasm</keyword>
<keyword id="KW-0206">Cytoskeleton</keyword>
<keyword id="KW-0217">Developmental protein</keyword>
<keyword id="KW-0493">Microtubule</keyword>
<keyword id="KW-0498">Mitosis</keyword>
<keyword id="KW-0597">Phosphoprotein</keyword>
<keyword id="KW-1185">Reference proteome</keyword>
<keyword id="KW-0677">Repeat</keyword>
<accession>Q8QZT2</accession>
<accession>Q8C3E1</accession>
<sequence length="252" mass="28379">MSPGSGVKSEYMKRYREPRWDEYAPCYRELLRYRLGRRLLEQAHAPWLWDAWGPDSPSDSSASPSPAPRGALGEPSAPSAREEEQPVGERGAELRDAEEQDTVLPAPPKKDTEEKPEEHKTKETDGAPSGPGPRQQPSALCARGSKKATRSPQRSTSKIKENKHPFALYGWGERQMDMGSQKTHNVCASASVHEIHESALRAKNRRQVEKRKLAAQRQRAHSVDVEKNQRVKPASAENPWLTEYMRCYSARA</sequence>
<evidence type="ECO:0000250" key="1">
    <source>
        <dbReference type="UniProtKB" id="Q6IQ19"/>
    </source>
</evidence>
<evidence type="ECO:0000250" key="2">
    <source>
        <dbReference type="UniProtKB" id="Q6P3G4"/>
    </source>
</evidence>
<evidence type="ECO:0000250" key="3">
    <source>
        <dbReference type="UniProtKB" id="Q8TC05"/>
    </source>
</evidence>
<evidence type="ECO:0000256" key="4">
    <source>
        <dbReference type="SAM" id="MobiDB-lite"/>
    </source>
</evidence>
<evidence type="ECO:0000305" key="5"/>
<evidence type="ECO:0007744" key="6">
    <source>
    </source>
</evidence>
<comment type="function">
    <text evidence="1 2">Plays a role in microtubule (MT) stabilization and this stabilization involves the maintenance of NUMA1 at the spindle poles. Colocalizes with polyglutamylated MTs to promote MT stabilization and regulate bipolar spindle formation in mitosis. Binding of CCSAP to centrosomes and the spindle around centrosomes during mitosis inhibits MT depolymerization, thereby stabilizing the mitotic spindle. May play a role in embryonic development. May be required for proper cilia beating (By similarity).</text>
</comment>
<comment type="subunit">
    <text evidence="1">Associates with microtubules; the association occurs on polyglutamylated tubulin.</text>
</comment>
<comment type="subcellular location">
    <subcellularLocation>
        <location evidence="1">Cytoplasm</location>
        <location evidence="1">Cytoskeleton</location>
        <location evidence="1">Microtubule organizing center</location>
        <location evidence="1">Centrosome</location>
        <location evidence="1">Centriole</location>
    </subcellularLocation>
    <subcellularLocation>
        <location evidence="1">Cytoplasm</location>
        <location evidence="1">Cytoskeleton</location>
        <location evidence="1">Spindle</location>
    </subcellularLocation>
    <subcellularLocation>
        <location evidence="1">Cytoplasm</location>
        <location evidence="1">Cytoskeleton</location>
    </subcellularLocation>
    <subcellularLocation>
        <location evidence="1">Cytoplasm</location>
        <location evidence="1">Cytoskeleton</location>
        <location evidence="1">Cilium basal body</location>
    </subcellularLocation>
    <subcellularLocation>
        <location evidence="1">Cytoplasm</location>
        <location evidence="1">Cytoskeleton</location>
        <location evidence="1">Cilium axoneme</location>
    </subcellularLocation>
    <subcellularLocation>
        <location evidence="1">Cell projection</location>
        <location evidence="1">Axon</location>
    </subcellularLocation>
    <subcellularLocation>
        <location evidence="1">Cell projection</location>
        <location evidence="1">Cilium</location>
    </subcellularLocation>
    <subcellularLocation>
        <location evidence="1">Cytoplasm</location>
        <location evidence="1">Cytoskeleton</location>
        <location evidence="1">Microtubule organizing center</location>
        <location evidence="1">Centrosome</location>
    </subcellularLocation>
    <text evidence="1">Localizes to two to four centrioles throughout the cell cycle. Localizes to mitotic spindle microtubules during prometaphase and throughout the remainder of mitosis. Localizes to cytoskeleton on interphase. Localizes at the ciliary transition zone which connects the basal bodies to ciliary microtubules. Colocalizes with polyglutamylated tubulin (By similarity).</text>
</comment>
<comment type="similarity">
    <text evidence="5">Belongs to the CCSAP family.</text>
</comment>
<comment type="sequence caution" evidence="5">
    <conflict type="frameshift">
        <sequence resource="EMBL-CDS" id="BAC39624"/>
    </conflict>
</comment>
<reference key="1">
    <citation type="journal article" date="2005" name="Science">
        <title>The transcriptional landscape of the mammalian genome.</title>
        <authorList>
            <person name="Carninci P."/>
            <person name="Kasukawa T."/>
            <person name="Katayama S."/>
            <person name="Gough J."/>
            <person name="Frith M.C."/>
            <person name="Maeda N."/>
            <person name="Oyama R."/>
            <person name="Ravasi T."/>
            <person name="Lenhard B."/>
            <person name="Wells C."/>
            <person name="Kodzius R."/>
            <person name="Shimokawa K."/>
            <person name="Bajic V.B."/>
            <person name="Brenner S.E."/>
            <person name="Batalov S."/>
            <person name="Forrest A.R."/>
            <person name="Zavolan M."/>
            <person name="Davis M.J."/>
            <person name="Wilming L.G."/>
            <person name="Aidinis V."/>
            <person name="Allen J.E."/>
            <person name="Ambesi-Impiombato A."/>
            <person name="Apweiler R."/>
            <person name="Aturaliya R.N."/>
            <person name="Bailey T.L."/>
            <person name="Bansal M."/>
            <person name="Baxter L."/>
            <person name="Beisel K.W."/>
            <person name="Bersano T."/>
            <person name="Bono H."/>
            <person name="Chalk A.M."/>
            <person name="Chiu K.P."/>
            <person name="Choudhary V."/>
            <person name="Christoffels A."/>
            <person name="Clutterbuck D.R."/>
            <person name="Crowe M.L."/>
            <person name="Dalla E."/>
            <person name="Dalrymple B.P."/>
            <person name="de Bono B."/>
            <person name="Della Gatta G."/>
            <person name="di Bernardo D."/>
            <person name="Down T."/>
            <person name="Engstrom P."/>
            <person name="Fagiolini M."/>
            <person name="Faulkner G."/>
            <person name="Fletcher C.F."/>
            <person name="Fukushima T."/>
            <person name="Furuno M."/>
            <person name="Futaki S."/>
            <person name="Gariboldi M."/>
            <person name="Georgii-Hemming P."/>
            <person name="Gingeras T.R."/>
            <person name="Gojobori T."/>
            <person name="Green R.E."/>
            <person name="Gustincich S."/>
            <person name="Harbers M."/>
            <person name="Hayashi Y."/>
            <person name="Hensch T.K."/>
            <person name="Hirokawa N."/>
            <person name="Hill D."/>
            <person name="Huminiecki L."/>
            <person name="Iacono M."/>
            <person name="Ikeo K."/>
            <person name="Iwama A."/>
            <person name="Ishikawa T."/>
            <person name="Jakt M."/>
            <person name="Kanapin A."/>
            <person name="Katoh M."/>
            <person name="Kawasawa Y."/>
            <person name="Kelso J."/>
            <person name="Kitamura H."/>
            <person name="Kitano H."/>
            <person name="Kollias G."/>
            <person name="Krishnan S.P."/>
            <person name="Kruger A."/>
            <person name="Kummerfeld S.K."/>
            <person name="Kurochkin I.V."/>
            <person name="Lareau L.F."/>
            <person name="Lazarevic D."/>
            <person name="Lipovich L."/>
            <person name="Liu J."/>
            <person name="Liuni S."/>
            <person name="McWilliam S."/>
            <person name="Madan Babu M."/>
            <person name="Madera M."/>
            <person name="Marchionni L."/>
            <person name="Matsuda H."/>
            <person name="Matsuzawa S."/>
            <person name="Miki H."/>
            <person name="Mignone F."/>
            <person name="Miyake S."/>
            <person name="Morris K."/>
            <person name="Mottagui-Tabar S."/>
            <person name="Mulder N."/>
            <person name="Nakano N."/>
            <person name="Nakauchi H."/>
            <person name="Ng P."/>
            <person name="Nilsson R."/>
            <person name="Nishiguchi S."/>
            <person name="Nishikawa S."/>
            <person name="Nori F."/>
            <person name="Ohara O."/>
            <person name="Okazaki Y."/>
            <person name="Orlando V."/>
            <person name="Pang K.C."/>
            <person name="Pavan W.J."/>
            <person name="Pavesi G."/>
            <person name="Pesole G."/>
            <person name="Petrovsky N."/>
            <person name="Piazza S."/>
            <person name="Reed J."/>
            <person name="Reid J.F."/>
            <person name="Ring B.Z."/>
            <person name="Ringwald M."/>
            <person name="Rost B."/>
            <person name="Ruan Y."/>
            <person name="Salzberg S.L."/>
            <person name="Sandelin A."/>
            <person name="Schneider C."/>
            <person name="Schoenbach C."/>
            <person name="Sekiguchi K."/>
            <person name="Semple C.A."/>
            <person name="Seno S."/>
            <person name="Sessa L."/>
            <person name="Sheng Y."/>
            <person name="Shibata Y."/>
            <person name="Shimada H."/>
            <person name="Shimada K."/>
            <person name="Silva D."/>
            <person name="Sinclair B."/>
            <person name="Sperling S."/>
            <person name="Stupka E."/>
            <person name="Sugiura K."/>
            <person name="Sultana R."/>
            <person name="Takenaka Y."/>
            <person name="Taki K."/>
            <person name="Tammoja K."/>
            <person name="Tan S.L."/>
            <person name="Tang S."/>
            <person name="Taylor M.S."/>
            <person name="Tegner J."/>
            <person name="Teichmann S.A."/>
            <person name="Ueda H.R."/>
            <person name="van Nimwegen E."/>
            <person name="Verardo R."/>
            <person name="Wei C.L."/>
            <person name="Yagi K."/>
            <person name="Yamanishi H."/>
            <person name="Zabarovsky E."/>
            <person name="Zhu S."/>
            <person name="Zimmer A."/>
            <person name="Hide W."/>
            <person name="Bult C."/>
            <person name="Grimmond S.M."/>
            <person name="Teasdale R.D."/>
            <person name="Liu E.T."/>
            <person name="Brusic V."/>
            <person name="Quackenbush J."/>
            <person name="Wahlestedt C."/>
            <person name="Mattick J.S."/>
            <person name="Hume D.A."/>
            <person name="Kai C."/>
            <person name="Sasaki D."/>
            <person name="Tomaru Y."/>
            <person name="Fukuda S."/>
            <person name="Kanamori-Katayama M."/>
            <person name="Suzuki M."/>
            <person name="Aoki J."/>
            <person name="Arakawa T."/>
            <person name="Iida J."/>
            <person name="Imamura K."/>
            <person name="Itoh M."/>
            <person name="Kato T."/>
            <person name="Kawaji H."/>
            <person name="Kawagashira N."/>
            <person name="Kawashima T."/>
            <person name="Kojima M."/>
            <person name="Kondo S."/>
            <person name="Konno H."/>
            <person name="Nakano K."/>
            <person name="Ninomiya N."/>
            <person name="Nishio T."/>
            <person name="Okada M."/>
            <person name="Plessy C."/>
            <person name="Shibata K."/>
            <person name="Shiraki T."/>
            <person name="Suzuki S."/>
            <person name="Tagami M."/>
            <person name="Waki K."/>
            <person name="Watahiki A."/>
            <person name="Okamura-Oho Y."/>
            <person name="Suzuki H."/>
            <person name="Kawai J."/>
            <person name="Hayashizaki Y."/>
        </authorList>
    </citation>
    <scope>NUCLEOTIDE SEQUENCE [LARGE SCALE MRNA]</scope>
    <source>
        <strain>C57BL/6J</strain>
        <tissue>Head</tissue>
    </source>
</reference>
<reference key="2">
    <citation type="journal article" date="2004" name="Genome Res.">
        <title>The status, quality, and expansion of the NIH full-length cDNA project: the Mammalian Gene Collection (MGC).</title>
        <authorList>
            <consortium name="The MGC Project Team"/>
        </authorList>
    </citation>
    <scope>NUCLEOTIDE SEQUENCE [LARGE SCALE MRNA]</scope>
    <source>
        <tissue>Eye</tissue>
        <tissue>Mammary tumor</tissue>
    </source>
</reference>
<reference key="3">
    <citation type="journal article" date="2010" name="Cell">
        <title>A tissue-specific atlas of mouse protein phosphorylation and expression.</title>
        <authorList>
            <person name="Huttlin E.L."/>
            <person name="Jedrychowski M.P."/>
            <person name="Elias J.E."/>
            <person name="Goswami T."/>
            <person name="Rad R."/>
            <person name="Beausoleil S.A."/>
            <person name="Villen J."/>
            <person name="Haas W."/>
            <person name="Sowa M.E."/>
            <person name="Gygi S.P."/>
        </authorList>
    </citation>
    <scope>PHOSPHORYLATION [LARGE SCALE ANALYSIS] AT SER-65 AND SER-191</scope>
    <scope>IDENTIFICATION BY MASS SPECTROMETRY [LARGE SCALE ANALYSIS]</scope>
    <source>
        <tissue>Brain</tissue>
    </source>
</reference>
<gene>
    <name type="primary">Ccsap</name>
</gene>
<protein>
    <recommendedName>
        <fullName>Centriole, cilia and spindle-associated protein</fullName>
    </recommendedName>
</protein>
<feature type="chain" id="PRO_0000284644" description="Centriole, cilia and spindle-associated protein">
    <location>
        <begin position="1"/>
        <end position="252"/>
    </location>
</feature>
<feature type="region of interest" description="Disordered" evidence="4">
    <location>
        <begin position="49"/>
        <end position="163"/>
    </location>
</feature>
<feature type="short sequence motif" description="ST]-E-Y-X(3)-Y motif 1; required for efficient microtubule binding and stabilization" evidence="3">
    <location>
        <begin position="9"/>
        <end position="15"/>
    </location>
</feature>
<feature type="short sequence motif" description="ST]-E-Y-X(3)-Y motif 2; required for efficient microtubule binding and stabilization" evidence="3">
    <location>
        <begin position="242"/>
        <end position="248"/>
    </location>
</feature>
<feature type="compositionally biased region" description="Low complexity" evidence="4">
    <location>
        <begin position="54"/>
        <end position="64"/>
    </location>
</feature>
<feature type="compositionally biased region" description="Basic and acidic residues" evidence="4">
    <location>
        <begin position="108"/>
        <end position="125"/>
    </location>
</feature>
<feature type="modified residue" description="N-acetylmethionine" evidence="1">
    <location>
        <position position="1"/>
    </location>
</feature>
<feature type="modified residue" description="Phosphoserine" evidence="6">
    <location>
        <position position="65"/>
    </location>
</feature>
<feature type="modified residue" description="Phosphoserine" evidence="6">
    <location>
        <position position="191"/>
    </location>
</feature>
<feature type="sequence conflict" description="In Ref. 1; BAC39624." evidence="5" ref="1">
    <original>S</original>
    <variation>I</variation>
    <location>
        <position position="129"/>
    </location>
</feature>
<feature type="sequence conflict" description="In Ref. 1; BAC39624." evidence="5" ref="1">
    <original>Q</original>
    <variation>K</variation>
    <location>
        <position position="175"/>
    </location>
</feature>
<proteinExistence type="evidence at protein level"/>
<name>CCSAP_MOUSE</name>
<organism>
    <name type="scientific">Mus musculus</name>
    <name type="common">Mouse</name>
    <dbReference type="NCBI Taxonomy" id="10090"/>
    <lineage>
        <taxon>Eukaryota</taxon>
        <taxon>Metazoa</taxon>
        <taxon>Chordata</taxon>
        <taxon>Craniata</taxon>
        <taxon>Vertebrata</taxon>
        <taxon>Euteleostomi</taxon>
        <taxon>Mammalia</taxon>
        <taxon>Eutheria</taxon>
        <taxon>Euarchontoglires</taxon>
        <taxon>Glires</taxon>
        <taxon>Rodentia</taxon>
        <taxon>Myomorpha</taxon>
        <taxon>Muroidea</taxon>
        <taxon>Muridae</taxon>
        <taxon>Murinae</taxon>
        <taxon>Mus</taxon>
        <taxon>Mus</taxon>
    </lineage>
</organism>
<dbReference type="EMBL" id="AK086180">
    <property type="protein sequence ID" value="BAC39624.1"/>
    <property type="status" value="ALT_FRAME"/>
    <property type="molecule type" value="mRNA"/>
</dbReference>
<dbReference type="EMBL" id="BC024705">
    <property type="protein sequence ID" value="AAH24705.1"/>
    <property type="molecule type" value="mRNA"/>
</dbReference>
<dbReference type="EMBL" id="BC036300">
    <property type="protein sequence ID" value="AAH36300.1"/>
    <property type="molecule type" value="mRNA"/>
</dbReference>
<dbReference type="CCDS" id="CCDS22763.1"/>
<dbReference type="RefSeq" id="NP_001366218.1">
    <property type="nucleotide sequence ID" value="NM_001379289.1"/>
</dbReference>
<dbReference type="RefSeq" id="NP_082812.1">
    <property type="nucleotide sequence ID" value="NM_028536.1"/>
</dbReference>
<dbReference type="SMR" id="Q8QZT2"/>
<dbReference type="BioGRID" id="216002">
    <property type="interactions" value="3"/>
</dbReference>
<dbReference type="FunCoup" id="Q8QZT2">
    <property type="interactions" value="702"/>
</dbReference>
<dbReference type="STRING" id="10090.ENSMUSP00000113319"/>
<dbReference type="iPTMnet" id="Q8QZT2"/>
<dbReference type="PhosphoSitePlus" id="Q8QZT2"/>
<dbReference type="jPOST" id="Q8QZT2"/>
<dbReference type="PaxDb" id="10090-ENSMUSP00000113319"/>
<dbReference type="PeptideAtlas" id="Q8QZT2"/>
<dbReference type="ProteomicsDB" id="279952"/>
<dbReference type="Pumba" id="Q8QZT2"/>
<dbReference type="Antibodypedia" id="34675">
    <property type="antibodies" value="90 antibodies from 16 providers"/>
</dbReference>
<dbReference type="Ensembl" id="ENSMUST00000034452.12">
    <property type="protein sequence ID" value="ENSMUSP00000034452.6"/>
    <property type="gene ID" value="ENSMUSG00000031971.16"/>
</dbReference>
<dbReference type="Ensembl" id="ENSMUST00000122421.2">
    <property type="protein sequence ID" value="ENSMUSP00000113319.2"/>
    <property type="gene ID" value="ENSMUSG00000031971.16"/>
</dbReference>
<dbReference type="GeneID" id="73420"/>
<dbReference type="KEGG" id="mmu:73420"/>
<dbReference type="UCSC" id="uc009nwp.1">
    <property type="organism name" value="mouse"/>
</dbReference>
<dbReference type="AGR" id="MGI:1920670"/>
<dbReference type="CTD" id="126731"/>
<dbReference type="MGI" id="MGI:1920670">
    <property type="gene designation" value="Ccsap"/>
</dbReference>
<dbReference type="VEuPathDB" id="HostDB:ENSMUSG00000031971"/>
<dbReference type="eggNOG" id="ENOG502S0N0">
    <property type="taxonomic scope" value="Eukaryota"/>
</dbReference>
<dbReference type="GeneTree" id="ENSGT00390000003512"/>
<dbReference type="HOGENOM" id="CLU_054214_0_0_1"/>
<dbReference type="InParanoid" id="Q8QZT2"/>
<dbReference type="OMA" id="WETYAKC"/>
<dbReference type="OrthoDB" id="6616361at2759"/>
<dbReference type="PhylomeDB" id="Q8QZT2"/>
<dbReference type="TreeFam" id="TF332378"/>
<dbReference type="BioGRID-ORCS" id="73420">
    <property type="hits" value="0 hits in 76 CRISPR screens"/>
</dbReference>
<dbReference type="CD-CODE" id="CE726F99">
    <property type="entry name" value="Postsynaptic density"/>
</dbReference>
<dbReference type="ChiTaRS" id="Ccsap">
    <property type="organism name" value="mouse"/>
</dbReference>
<dbReference type="PRO" id="PR:Q8QZT2"/>
<dbReference type="Proteomes" id="UP000000589">
    <property type="component" value="Chromosome 8"/>
</dbReference>
<dbReference type="RNAct" id="Q8QZT2">
    <property type="molecule type" value="protein"/>
</dbReference>
<dbReference type="Bgee" id="ENSMUSG00000031971">
    <property type="expression patterns" value="Expressed in superior frontal gyrus and 104 other cell types or tissues"/>
</dbReference>
<dbReference type="GO" id="GO:0030424">
    <property type="term" value="C:axon"/>
    <property type="evidence" value="ECO:0000250"/>
    <property type="project" value="UniProtKB"/>
</dbReference>
<dbReference type="GO" id="GO:0005930">
    <property type="term" value="C:axoneme"/>
    <property type="evidence" value="ECO:0000250"/>
    <property type="project" value="UniProtKB"/>
</dbReference>
<dbReference type="GO" id="GO:0005814">
    <property type="term" value="C:centriole"/>
    <property type="evidence" value="ECO:0000250"/>
    <property type="project" value="UniProtKB"/>
</dbReference>
<dbReference type="GO" id="GO:0005813">
    <property type="term" value="C:centrosome"/>
    <property type="evidence" value="ECO:0000250"/>
    <property type="project" value="UniProtKB"/>
</dbReference>
<dbReference type="GO" id="GO:0036064">
    <property type="term" value="C:ciliary basal body"/>
    <property type="evidence" value="ECO:0000250"/>
    <property type="project" value="UniProtKB"/>
</dbReference>
<dbReference type="GO" id="GO:0035869">
    <property type="term" value="C:ciliary transition zone"/>
    <property type="evidence" value="ECO:0000250"/>
    <property type="project" value="UniProtKB"/>
</dbReference>
<dbReference type="GO" id="GO:0005929">
    <property type="term" value="C:cilium"/>
    <property type="evidence" value="ECO:0000250"/>
    <property type="project" value="UniProtKB"/>
</dbReference>
<dbReference type="GO" id="GO:0072686">
    <property type="term" value="C:mitotic spindle"/>
    <property type="evidence" value="ECO:0000250"/>
    <property type="project" value="UniProtKB"/>
</dbReference>
<dbReference type="GO" id="GO:0061673">
    <property type="term" value="C:mitotic spindle astral microtubule"/>
    <property type="evidence" value="ECO:0000250"/>
    <property type="project" value="UniProtKB"/>
</dbReference>
<dbReference type="GO" id="GO:0005819">
    <property type="term" value="C:spindle"/>
    <property type="evidence" value="ECO:0000250"/>
    <property type="project" value="UniProtKB"/>
</dbReference>
<dbReference type="GO" id="GO:0008017">
    <property type="term" value="F:microtubule binding"/>
    <property type="evidence" value="ECO:0000250"/>
    <property type="project" value="UniProtKB"/>
</dbReference>
<dbReference type="GO" id="GO:0051301">
    <property type="term" value="P:cell division"/>
    <property type="evidence" value="ECO:0007669"/>
    <property type="project" value="UniProtKB-KW"/>
</dbReference>
<dbReference type="GO" id="GO:1990755">
    <property type="term" value="P:mitotic spindle microtubule depolymerization"/>
    <property type="evidence" value="ECO:0000250"/>
    <property type="project" value="UniProtKB"/>
</dbReference>
<dbReference type="GO" id="GO:0045995">
    <property type="term" value="P:regulation of embryonic development"/>
    <property type="evidence" value="ECO:0000250"/>
    <property type="project" value="UniProtKB"/>
</dbReference>
<dbReference type="GO" id="GO:1901673">
    <property type="term" value="P:regulation of mitotic spindle assembly"/>
    <property type="evidence" value="ECO:0000250"/>
    <property type="project" value="UniProtKB"/>
</dbReference>
<dbReference type="InterPro" id="IPR029774">
    <property type="entry name" value="CSAP"/>
</dbReference>
<dbReference type="PANTHER" id="PTHR31022">
    <property type="entry name" value="CENTRIOLE, CILIA AND SPINDLE-ASSOCIATED PROTEIN"/>
    <property type="match status" value="1"/>
</dbReference>
<dbReference type="PANTHER" id="PTHR31022:SF4">
    <property type="entry name" value="CENTRIOLE, CILIA AND SPINDLE-ASSOCIATED PROTEIN"/>
    <property type="match status" value="1"/>
</dbReference>
<dbReference type="Pfam" id="PF15748">
    <property type="entry name" value="CCSAP"/>
    <property type="match status" value="1"/>
</dbReference>